<feature type="chain" id="PRO_0000134203" description="Small ribosomal subunit protein uS2">
    <location>
        <begin position="1"/>
        <end position="287"/>
    </location>
</feature>
<feature type="region of interest" description="Disordered" evidence="1">
    <location>
        <begin position="254"/>
        <end position="287"/>
    </location>
</feature>
<feature type="compositionally biased region" description="Low complexity" evidence="1">
    <location>
        <begin position="254"/>
        <end position="277"/>
    </location>
</feature>
<accession>P9WH39</accession>
<accession>L0TDV3</accession>
<accession>P66537</accession>
<accession>Q10796</accession>
<comment type="similarity">
    <text evidence="2">Belongs to the universal ribosomal protein uS2 family.</text>
</comment>
<sequence>MAVVTMKQLLDSGTHFGHQTRRWNPKMKRFIFTDRNGIYIIDLQQTLTFIDKAYEFVKETVAHGGSVLFVGTKKQAQESVAAEATRVGMPYVNQRWLGGMLTNFSTVHKRLQRLKELEAMEQTGGFEGRTKKEILGLTREKNKLERSLGGIRDMAKVPSAIWVVDTNKEHIAVGEARKLGIPVIAILDTNCDPDEVDYPIPGNDDAIRSAALLTRVIASAVAEGLQARAGLGRADGKPEAEAAEPLAEWEQELLASATASATPSATASTTALTDAPAGATEPTTDAS</sequence>
<protein>
    <recommendedName>
        <fullName evidence="2">Small ribosomal subunit protein uS2</fullName>
    </recommendedName>
    <alternativeName>
        <fullName>30S ribosomal protein S2</fullName>
    </alternativeName>
</protein>
<keyword id="KW-1185">Reference proteome</keyword>
<keyword id="KW-0687">Ribonucleoprotein</keyword>
<keyword id="KW-0689">Ribosomal protein</keyword>
<evidence type="ECO:0000256" key="1">
    <source>
        <dbReference type="SAM" id="MobiDB-lite"/>
    </source>
</evidence>
<evidence type="ECO:0000305" key="2"/>
<name>RS2_MYCTU</name>
<proteinExistence type="evidence at protein level"/>
<dbReference type="EMBL" id="AL123456">
    <property type="protein sequence ID" value="CCP45692.1"/>
    <property type="molecule type" value="Genomic_DNA"/>
</dbReference>
<dbReference type="PIR" id="E70925">
    <property type="entry name" value="E70925"/>
</dbReference>
<dbReference type="RefSeq" id="NP_217406.1">
    <property type="nucleotide sequence ID" value="NC_000962.3"/>
</dbReference>
<dbReference type="RefSeq" id="WP_003899528.1">
    <property type="nucleotide sequence ID" value="NZ_NVQJ01000006.1"/>
</dbReference>
<dbReference type="SMR" id="P9WH39"/>
<dbReference type="FunCoup" id="P9WH39">
    <property type="interactions" value="373"/>
</dbReference>
<dbReference type="STRING" id="83332.Rv2890c"/>
<dbReference type="PaxDb" id="83332-Rv2890c"/>
<dbReference type="DNASU" id="887187"/>
<dbReference type="GeneID" id="45426878"/>
<dbReference type="GeneID" id="887187"/>
<dbReference type="KEGG" id="mtu:Rv2890c"/>
<dbReference type="KEGG" id="mtv:RVBD_2890c"/>
<dbReference type="TubercuList" id="Rv2890c"/>
<dbReference type="eggNOG" id="COG0052">
    <property type="taxonomic scope" value="Bacteria"/>
</dbReference>
<dbReference type="InParanoid" id="P9WH39"/>
<dbReference type="OrthoDB" id="9808036at2"/>
<dbReference type="PhylomeDB" id="P9WH39"/>
<dbReference type="PRO" id="PR:P9WH39"/>
<dbReference type="Proteomes" id="UP000001584">
    <property type="component" value="Chromosome"/>
</dbReference>
<dbReference type="GO" id="GO:0022627">
    <property type="term" value="C:cytosolic small ribosomal subunit"/>
    <property type="evidence" value="ECO:0000318"/>
    <property type="project" value="GO_Central"/>
</dbReference>
<dbReference type="GO" id="GO:0009274">
    <property type="term" value="C:peptidoglycan-based cell wall"/>
    <property type="evidence" value="ECO:0007005"/>
    <property type="project" value="MTBBASE"/>
</dbReference>
<dbReference type="GO" id="GO:0005886">
    <property type="term" value="C:plasma membrane"/>
    <property type="evidence" value="ECO:0007005"/>
    <property type="project" value="MTBBASE"/>
</dbReference>
<dbReference type="GO" id="GO:0003735">
    <property type="term" value="F:structural constituent of ribosome"/>
    <property type="evidence" value="ECO:0000318"/>
    <property type="project" value="GO_Central"/>
</dbReference>
<dbReference type="GO" id="GO:0006412">
    <property type="term" value="P:translation"/>
    <property type="evidence" value="ECO:0007669"/>
    <property type="project" value="UniProtKB-UniRule"/>
</dbReference>
<dbReference type="CDD" id="cd01425">
    <property type="entry name" value="RPS2"/>
    <property type="match status" value="1"/>
</dbReference>
<dbReference type="FunFam" id="1.10.287.610:FF:000001">
    <property type="entry name" value="30S ribosomal protein S2"/>
    <property type="match status" value="1"/>
</dbReference>
<dbReference type="Gene3D" id="3.40.50.10490">
    <property type="entry name" value="Glucose-6-phosphate isomerase like protein, domain 1"/>
    <property type="match status" value="1"/>
</dbReference>
<dbReference type="Gene3D" id="1.10.287.610">
    <property type="entry name" value="Helix hairpin bin"/>
    <property type="match status" value="1"/>
</dbReference>
<dbReference type="HAMAP" id="MF_00291_B">
    <property type="entry name" value="Ribosomal_uS2_B"/>
    <property type="match status" value="1"/>
</dbReference>
<dbReference type="InterPro" id="IPR001865">
    <property type="entry name" value="Ribosomal_uS2"/>
</dbReference>
<dbReference type="InterPro" id="IPR005706">
    <property type="entry name" value="Ribosomal_uS2_bac/mit/plastid"/>
</dbReference>
<dbReference type="InterPro" id="IPR018130">
    <property type="entry name" value="Ribosomal_uS2_CS"/>
</dbReference>
<dbReference type="InterPro" id="IPR023591">
    <property type="entry name" value="Ribosomal_uS2_flav_dom_sf"/>
</dbReference>
<dbReference type="NCBIfam" id="TIGR01011">
    <property type="entry name" value="rpsB_bact"/>
    <property type="match status" value="1"/>
</dbReference>
<dbReference type="PANTHER" id="PTHR12534">
    <property type="entry name" value="30S RIBOSOMAL PROTEIN S2 PROKARYOTIC AND ORGANELLAR"/>
    <property type="match status" value="1"/>
</dbReference>
<dbReference type="PANTHER" id="PTHR12534:SF0">
    <property type="entry name" value="SMALL RIBOSOMAL SUBUNIT PROTEIN US2M"/>
    <property type="match status" value="1"/>
</dbReference>
<dbReference type="Pfam" id="PF00318">
    <property type="entry name" value="Ribosomal_S2"/>
    <property type="match status" value="1"/>
</dbReference>
<dbReference type="PRINTS" id="PR00395">
    <property type="entry name" value="RIBOSOMALS2"/>
</dbReference>
<dbReference type="SUPFAM" id="SSF52313">
    <property type="entry name" value="Ribosomal protein S2"/>
    <property type="match status" value="1"/>
</dbReference>
<dbReference type="PROSITE" id="PS00962">
    <property type="entry name" value="RIBOSOMAL_S2_1"/>
    <property type="match status" value="1"/>
</dbReference>
<reference key="1">
    <citation type="journal article" date="1998" name="Nature">
        <title>Deciphering the biology of Mycobacterium tuberculosis from the complete genome sequence.</title>
        <authorList>
            <person name="Cole S.T."/>
            <person name="Brosch R."/>
            <person name="Parkhill J."/>
            <person name="Garnier T."/>
            <person name="Churcher C.M."/>
            <person name="Harris D.E."/>
            <person name="Gordon S.V."/>
            <person name="Eiglmeier K."/>
            <person name="Gas S."/>
            <person name="Barry C.E. III"/>
            <person name="Tekaia F."/>
            <person name="Badcock K."/>
            <person name="Basham D."/>
            <person name="Brown D."/>
            <person name="Chillingworth T."/>
            <person name="Connor R."/>
            <person name="Davies R.M."/>
            <person name="Devlin K."/>
            <person name="Feltwell T."/>
            <person name="Gentles S."/>
            <person name="Hamlin N."/>
            <person name="Holroyd S."/>
            <person name="Hornsby T."/>
            <person name="Jagels K."/>
            <person name="Krogh A."/>
            <person name="McLean J."/>
            <person name="Moule S."/>
            <person name="Murphy L.D."/>
            <person name="Oliver S."/>
            <person name="Osborne J."/>
            <person name="Quail M.A."/>
            <person name="Rajandream M.A."/>
            <person name="Rogers J."/>
            <person name="Rutter S."/>
            <person name="Seeger K."/>
            <person name="Skelton S."/>
            <person name="Squares S."/>
            <person name="Squares R."/>
            <person name="Sulston J.E."/>
            <person name="Taylor K."/>
            <person name="Whitehead S."/>
            <person name="Barrell B.G."/>
        </authorList>
    </citation>
    <scope>NUCLEOTIDE SEQUENCE [LARGE SCALE GENOMIC DNA]</scope>
    <source>
        <strain>ATCC 25618 / H37Rv</strain>
    </source>
</reference>
<reference key="2">
    <citation type="journal article" date="2011" name="Mol. Cell. Proteomics">
        <title>Proteogenomic analysis of Mycobacterium tuberculosis by high resolution mass spectrometry.</title>
        <authorList>
            <person name="Kelkar D.S."/>
            <person name="Kumar D."/>
            <person name="Kumar P."/>
            <person name="Balakrishnan L."/>
            <person name="Muthusamy B."/>
            <person name="Yadav A.K."/>
            <person name="Shrivastava P."/>
            <person name="Marimuthu A."/>
            <person name="Anand S."/>
            <person name="Sundaram H."/>
            <person name="Kingsbury R."/>
            <person name="Harsha H.C."/>
            <person name="Nair B."/>
            <person name="Prasad T.S."/>
            <person name="Chauhan D.S."/>
            <person name="Katoch K."/>
            <person name="Katoch V.M."/>
            <person name="Kumar P."/>
            <person name="Chaerkady R."/>
            <person name="Ramachandran S."/>
            <person name="Dash D."/>
            <person name="Pandey A."/>
        </authorList>
    </citation>
    <scope>IDENTIFICATION BY MASS SPECTROMETRY [LARGE SCALE ANALYSIS]</scope>
    <source>
        <strain>ATCC 25618 / H37Rv</strain>
    </source>
</reference>
<gene>
    <name type="primary">rpsB</name>
    <name type="ordered locus">Rv2890c</name>
    <name type="ORF">MTCY274.21c</name>
</gene>
<organism>
    <name type="scientific">Mycobacterium tuberculosis (strain ATCC 25618 / H37Rv)</name>
    <dbReference type="NCBI Taxonomy" id="83332"/>
    <lineage>
        <taxon>Bacteria</taxon>
        <taxon>Bacillati</taxon>
        <taxon>Actinomycetota</taxon>
        <taxon>Actinomycetes</taxon>
        <taxon>Mycobacteriales</taxon>
        <taxon>Mycobacteriaceae</taxon>
        <taxon>Mycobacterium</taxon>
        <taxon>Mycobacterium tuberculosis complex</taxon>
    </lineage>
</organism>